<gene>
    <name evidence="1" type="primary">aroB</name>
    <name type="ordered locus">P9211_07971</name>
</gene>
<evidence type="ECO:0000255" key="1">
    <source>
        <dbReference type="HAMAP-Rule" id="MF_00110"/>
    </source>
</evidence>
<name>AROB_PROM4</name>
<keyword id="KW-0028">Amino-acid biosynthesis</keyword>
<keyword id="KW-0057">Aromatic amino acid biosynthesis</keyword>
<keyword id="KW-0170">Cobalt</keyword>
<keyword id="KW-0963">Cytoplasm</keyword>
<keyword id="KW-0456">Lyase</keyword>
<keyword id="KW-0479">Metal-binding</keyword>
<keyword id="KW-0520">NAD</keyword>
<keyword id="KW-0547">Nucleotide-binding</keyword>
<keyword id="KW-1185">Reference proteome</keyword>
<keyword id="KW-0862">Zinc</keyword>
<sequence>MNQNSIRIKIKLAHNPYEVVIKKNGLARIGEELKKIGFKKATKVLVVTNKDVSVHYGKEFIHNLSDNGFNPTLIEIKAGEERKNLATISDIHNAAYTSRLERGSLMIALGGGVIGDMTGFAAATWLRGVSFVQVPTTLLAMVDASVGGKTGVNHPKGKNLIGAFHQPKLVLIDPITLKTLPEREFKAGMAEVIKYGVISDKKLFRKLEDAPRLDKLETLTDRFLLEIIQRSVQTKAHIVELDEREGGIRAVLNYGHTFGHAIEALCGYGTWLHGEAVSMGMIAIGQLALERNIWNISDLERQRKVLCQAGLPTIWPRVCAEDVIEILKSDKKVKDGEINFIVPTEIGKVEIIKNFTVNEIKQALQKLASK</sequence>
<proteinExistence type="inferred from homology"/>
<protein>
    <recommendedName>
        <fullName evidence="1">3-dehydroquinate synthase</fullName>
        <shortName evidence="1">DHQS</shortName>
        <ecNumber evidence="1">4.2.3.4</ecNumber>
    </recommendedName>
</protein>
<reference key="1">
    <citation type="journal article" date="2007" name="PLoS Genet.">
        <title>Patterns and implications of gene gain and loss in the evolution of Prochlorococcus.</title>
        <authorList>
            <person name="Kettler G.C."/>
            <person name="Martiny A.C."/>
            <person name="Huang K."/>
            <person name="Zucker J."/>
            <person name="Coleman M.L."/>
            <person name="Rodrigue S."/>
            <person name="Chen F."/>
            <person name="Lapidus A."/>
            <person name="Ferriera S."/>
            <person name="Johnson J."/>
            <person name="Steglich C."/>
            <person name="Church G.M."/>
            <person name="Richardson P."/>
            <person name="Chisholm S.W."/>
        </authorList>
    </citation>
    <scope>NUCLEOTIDE SEQUENCE [LARGE SCALE GENOMIC DNA]</scope>
    <source>
        <strain>MIT 9211</strain>
    </source>
</reference>
<dbReference type="EC" id="4.2.3.4" evidence="1"/>
<dbReference type="EMBL" id="CP000878">
    <property type="protein sequence ID" value="ABX08728.1"/>
    <property type="molecule type" value="Genomic_DNA"/>
</dbReference>
<dbReference type="RefSeq" id="WP_012195350.1">
    <property type="nucleotide sequence ID" value="NC_009976.1"/>
</dbReference>
<dbReference type="SMR" id="A9BA66"/>
<dbReference type="STRING" id="93059.P9211_07971"/>
<dbReference type="KEGG" id="pmj:P9211_07971"/>
<dbReference type="eggNOG" id="COG0337">
    <property type="taxonomic scope" value="Bacteria"/>
</dbReference>
<dbReference type="HOGENOM" id="CLU_001201_0_2_3"/>
<dbReference type="OrthoDB" id="9806583at2"/>
<dbReference type="UniPathway" id="UPA00053">
    <property type="reaction ID" value="UER00085"/>
</dbReference>
<dbReference type="Proteomes" id="UP000000788">
    <property type="component" value="Chromosome"/>
</dbReference>
<dbReference type="GO" id="GO:0005737">
    <property type="term" value="C:cytoplasm"/>
    <property type="evidence" value="ECO:0007669"/>
    <property type="project" value="UniProtKB-SubCell"/>
</dbReference>
<dbReference type="GO" id="GO:0003856">
    <property type="term" value="F:3-dehydroquinate synthase activity"/>
    <property type="evidence" value="ECO:0007669"/>
    <property type="project" value="UniProtKB-UniRule"/>
</dbReference>
<dbReference type="GO" id="GO:0046872">
    <property type="term" value="F:metal ion binding"/>
    <property type="evidence" value="ECO:0007669"/>
    <property type="project" value="UniProtKB-KW"/>
</dbReference>
<dbReference type="GO" id="GO:0000166">
    <property type="term" value="F:nucleotide binding"/>
    <property type="evidence" value="ECO:0007669"/>
    <property type="project" value="UniProtKB-KW"/>
</dbReference>
<dbReference type="GO" id="GO:0008652">
    <property type="term" value="P:amino acid biosynthetic process"/>
    <property type="evidence" value="ECO:0007669"/>
    <property type="project" value="UniProtKB-KW"/>
</dbReference>
<dbReference type="GO" id="GO:0009073">
    <property type="term" value="P:aromatic amino acid family biosynthetic process"/>
    <property type="evidence" value="ECO:0007669"/>
    <property type="project" value="UniProtKB-KW"/>
</dbReference>
<dbReference type="GO" id="GO:0009423">
    <property type="term" value="P:chorismate biosynthetic process"/>
    <property type="evidence" value="ECO:0007669"/>
    <property type="project" value="UniProtKB-UniRule"/>
</dbReference>
<dbReference type="CDD" id="cd08195">
    <property type="entry name" value="DHQS"/>
    <property type="match status" value="1"/>
</dbReference>
<dbReference type="FunFam" id="3.40.50.1970:FF:000007">
    <property type="entry name" value="Pentafunctional AROM polypeptide"/>
    <property type="match status" value="1"/>
</dbReference>
<dbReference type="Gene3D" id="3.40.50.1970">
    <property type="match status" value="1"/>
</dbReference>
<dbReference type="Gene3D" id="1.20.1090.10">
    <property type="entry name" value="Dehydroquinate synthase-like - alpha domain"/>
    <property type="match status" value="1"/>
</dbReference>
<dbReference type="HAMAP" id="MF_00110">
    <property type="entry name" value="DHQ_synthase"/>
    <property type="match status" value="1"/>
</dbReference>
<dbReference type="InterPro" id="IPR050071">
    <property type="entry name" value="Dehydroquinate_synthase"/>
</dbReference>
<dbReference type="InterPro" id="IPR016037">
    <property type="entry name" value="DHQ_synth_AroB"/>
</dbReference>
<dbReference type="InterPro" id="IPR030963">
    <property type="entry name" value="DHQ_synth_fam"/>
</dbReference>
<dbReference type="InterPro" id="IPR030960">
    <property type="entry name" value="DHQS/DOIS_N"/>
</dbReference>
<dbReference type="InterPro" id="IPR056179">
    <property type="entry name" value="DHQS_C"/>
</dbReference>
<dbReference type="NCBIfam" id="TIGR01357">
    <property type="entry name" value="aroB"/>
    <property type="match status" value="1"/>
</dbReference>
<dbReference type="PANTHER" id="PTHR43622">
    <property type="entry name" value="3-DEHYDROQUINATE SYNTHASE"/>
    <property type="match status" value="1"/>
</dbReference>
<dbReference type="PANTHER" id="PTHR43622:SF7">
    <property type="entry name" value="3-DEHYDROQUINATE SYNTHASE, CHLOROPLASTIC"/>
    <property type="match status" value="1"/>
</dbReference>
<dbReference type="Pfam" id="PF01761">
    <property type="entry name" value="DHQ_synthase"/>
    <property type="match status" value="1"/>
</dbReference>
<dbReference type="Pfam" id="PF24621">
    <property type="entry name" value="DHQS_C"/>
    <property type="match status" value="1"/>
</dbReference>
<dbReference type="PIRSF" id="PIRSF001455">
    <property type="entry name" value="DHQ_synth"/>
    <property type="match status" value="1"/>
</dbReference>
<dbReference type="SUPFAM" id="SSF56796">
    <property type="entry name" value="Dehydroquinate synthase-like"/>
    <property type="match status" value="1"/>
</dbReference>
<comment type="function">
    <text evidence="1">Catalyzes the conversion of 3-deoxy-D-arabino-heptulosonate 7-phosphate (DAHP) to dehydroquinate (DHQ).</text>
</comment>
<comment type="catalytic activity">
    <reaction evidence="1">
        <text>7-phospho-2-dehydro-3-deoxy-D-arabino-heptonate = 3-dehydroquinate + phosphate</text>
        <dbReference type="Rhea" id="RHEA:21968"/>
        <dbReference type="ChEBI" id="CHEBI:32364"/>
        <dbReference type="ChEBI" id="CHEBI:43474"/>
        <dbReference type="ChEBI" id="CHEBI:58394"/>
        <dbReference type="EC" id="4.2.3.4"/>
    </reaction>
</comment>
<comment type="cofactor">
    <cofactor evidence="1">
        <name>Co(2+)</name>
        <dbReference type="ChEBI" id="CHEBI:48828"/>
    </cofactor>
    <cofactor evidence="1">
        <name>Zn(2+)</name>
        <dbReference type="ChEBI" id="CHEBI:29105"/>
    </cofactor>
    <text evidence="1">Binds 1 divalent metal cation per subunit. Can use either Co(2+) or Zn(2+).</text>
</comment>
<comment type="cofactor">
    <cofactor evidence="1">
        <name>NAD(+)</name>
        <dbReference type="ChEBI" id="CHEBI:57540"/>
    </cofactor>
</comment>
<comment type="pathway">
    <text evidence="1">Metabolic intermediate biosynthesis; chorismate biosynthesis; chorismate from D-erythrose 4-phosphate and phosphoenolpyruvate: step 2/7.</text>
</comment>
<comment type="subcellular location">
    <subcellularLocation>
        <location evidence="1">Cytoplasm</location>
    </subcellularLocation>
</comment>
<comment type="similarity">
    <text evidence="1">Belongs to the sugar phosphate cyclases superfamily. Dehydroquinate synthase family.</text>
</comment>
<accession>A9BA66</accession>
<feature type="chain" id="PRO_1000094564" description="3-dehydroquinate synthase">
    <location>
        <begin position="1"/>
        <end position="370"/>
    </location>
</feature>
<feature type="binding site" evidence="1">
    <location>
        <begin position="112"/>
        <end position="116"/>
    </location>
    <ligand>
        <name>NAD(+)</name>
        <dbReference type="ChEBI" id="CHEBI:57540"/>
    </ligand>
</feature>
<feature type="binding site" evidence="1">
    <location>
        <begin position="136"/>
        <end position="137"/>
    </location>
    <ligand>
        <name>NAD(+)</name>
        <dbReference type="ChEBI" id="CHEBI:57540"/>
    </ligand>
</feature>
<feature type="binding site" evidence="1">
    <location>
        <position position="149"/>
    </location>
    <ligand>
        <name>NAD(+)</name>
        <dbReference type="ChEBI" id="CHEBI:57540"/>
    </ligand>
</feature>
<feature type="binding site" evidence="1">
    <location>
        <position position="158"/>
    </location>
    <ligand>
        <name>NAD(+)</name>
        <dbReference type="ChEBI" id="CHEBI:57540"/>
    </ligand>
</feature>
<feature type="binding site" evidence="1">
    <location>
        <begin position="176"/>
        <end position="179"/>
    </location>
    <ligand>
        <name>NAD(+)</name>
        <dbReference type="ChEBI" id="CHEBI:57540"/>
    </ligand>
</feature>
<feature type="binding site" evidence="1">
    <location>
        <position position="191"/>
    </location>
    <ligand>
        <name>Zn(2+)</name>
        <dbReference type="ChEBI" id="CHEBI:29105"/>
    </ligand>
</feature>
<feature type="binding site" evidence="1">
    <location>
        <position position="256"/>
    </location>
    <ligand>
        <name>Zn(2+)</name>
        <dbReference type="ChEBI" id="CHEBI:29105"/>
    </ligand>
</feature>
<feature type="binding site" evidence="1">
    <location>
        <position position="273"/>
    </location>
    <ligand>
        <name>Zn(2+)</name>
        <dbReference type="ChEBI" id="CHEBI:29105"/>
    </ligand>
</feature>
<organism>
    <name type="scientific">Prochlorococcus marinus (strain MIT 9211)</name>
    <dbReference type="NCBI Taxonomy" id="93059"/>
    <lineage>
        <taxon>Bacteria</taxon>
        <taxon>Bacillati</taxon>
        <taxon>Cyanobacteriota</taxon>
        <taxon>Cyanophyceae</taxon>
        <taxon>Synechococcales</taxon>
        <taxon>Prochlorococcaceae</taxon>
        <taxon>Prochlorococcus</taxon>
    </lineage>
</organism>